<evidence type="ECO:0000305" key="1"/>
<evidence type="ECO:0000305" key="2">
    <source>
    </source>
</evidence>
<keyword id="KW-0997">Cell inner membrane</keyword>
<keyword id="KW-1003">Cell membrane</keyword>
<keyword id="KW-0204">Cytolysis</keyword>
<keyword id="KW-0354">Hemolysis</keyword>
<keyword id="KW-0472">Membrane</keyword>
<keyword id="KW-0614">Plasmid</keyword>
<keyword id="KW-0735">Signal-anchor</keyword>
<keyword id="KW-0812">Transmembrane</keyword>
<keyword id="KW-1133">Transmembrane helix</keyword>
<keyword id="KW-0813">Transport</keyword>
<gene>
    <name type="primary">hlyD</name>
</gene>
<geneLocation type="plasmid">
    <name>IncI2 pHLY152</name>
</geneLocation>
<protein>
    <recommendedName>
        <fullName>Hemolysin secretion protein D, plasmid</fullName>
    </recommendedName>
</protein>
<organism>
    <name type="scientific">Escherichia coli</name>
    <dbReference type="NCBI Taxonomy" id="562"/>
    <lineage>
        <taxon>Bacteria</taxon>
        <taxon>Pseudomonadati</taxon>
        <taxon>Pseudomonadota</taxon>
        <taxon>Gammaproteobacteria</taxon>
        <taxon>Enterobacterales</taxon>
        <taxon>Enterobacteriaceae</taxon>
        <taxon>Escherichia</taxon>
    </lineage>
</organism>
<name>HLYDP_ECOLX</name>
<comment type="function">
    <text>Involved in the transport of hemolysin A.</text>
</comment>
<comment type="subcellular location">
    <subcellularLocation>
        <location>Cell inner membrane</location>
        <topology>Single-pass type II membrane protein</topology>
    </subcellularLocation>
</comment>
<comment type="similarity">
    <text evidence="1">Belongs to the membrane fusion protein (MFP) (TC 8.A.1) family.</text>
</comment>
<dbReference type="EMBL" id="M14107">
    <property type="protein sequence ID" value="AAA98235.1"/>
    <property type="molecule type" value="Genomic_DNA"/>
</dbReference>
<dbReference type="PIR" id="S10058">
    <property type="entry name" value="S10058"/>
</dbReference>
<dbReference type="SMR" id="P06739"/>
<dbReference type="DIP" id="DIP-28121N"/>
<dbReference type="TCDB" id="8.A.1.3.1">
    <property type="family name" value="the membrane fusion protein (mfp) family"/>
</dbReference>
<dbReference type="GO" id="GO:0005886">
    <property type="term" value="C:plasma membrane"/>
    <property type="evidence" value="ECO:0007669"/>
    <property type="project" value="UniProtKB-SubCell"/>
</dbReference>
<dbReference type="GO" id="GO:0031640">
    <property type="term" value="P:killing of cells of another organism"/>
    <property type="evidence" value="ECO:0007669"/>
    <property type="project" value="UniProtKB-KW"/>
</dbReference>
<dbReference type="GO" id="GO:0009306">
    <property type="term" value="P:protein secretion"/>
    <property type="evidence" value="ECO:0007669"/>
    <property type="project" value="InterPro"/>
</dbReference>
<dbReference type="GO" id="GO:0055085">
    <property type="term" value="P:transmembrane transport"/>
    <property type="evidence" value="ECO:0007669"/>
    <property type="project" value="InterPro"/>
</dbReference>
<dbReference type="Gene3D" id="2.40.30.170">
    <property type="match status" value="1"/>
</dbReference>
<dbReference type="InterPro" id="IPR050739">
    <property type="entry name" value="MFP"/>
</dbReference>
<dbReference type="InterPro" id="IPR006144">
    <property type="entry name" value="Secretion_HlyD_CS"/>
</dbReference>
<dbReference type="InterPro" id="IPR010129">
    <property type="entry name" value="T1SS_HlyD"/>
</dbReference>
<dbReference type="NCBIfam" id="TIGR01843">
    <property type="entry name" value="type_I_hlyD"/>
    <property type="match status" value="1"/>
</dbReference>
<dbReference type="PANTHER" id="PTHR30386:SF27">
    <property type="entry name" value="MEMBRANE FUSION PROTEIN (MFP) FAMILY PROTEIN"/>
    <property type="match status" value="1"/>
</dbReference>
<dbReference type="PANTHER" id="PTHR30386">
    <property type="entry name" value="MEMBRANE FUSION SUBUNIT OF EMRAB-TOLC MULTIDRUG EFFLUX PUMP"/>
    <property type="match status" value="1"/>
</dbReference>
<dbReference type="Pfam" id="PF13437">
    <property type="entry name" value="HlyD_3"/>
    <property type="match status" value="1"/>
</dbReference>
<dbReference type="PRINTS" id="PR01490">
    <property type="entry name" value="RTXTOXIND"/>
</dbReference>
<dbReference type="SUPFAM" id="SSF111369">
    <property type="entry name" value="HlyD-like secretion proteins"/>
    <property type="match status" value="1"/>
</dbReference>
<dbReference type="PROSITE" id="PS00543">
    <property type="entry name" value="HLYD_FAMILY"/>
    <property type="match status" value="1"/>
</dbReference>
<proteinExistence type="evidence at protein level"/>
<reference key="1">
    <citation type="journal article" date="1986" name="FEMS Microbiol. Lett.">
        <title>Nucleotide sequence of a plasmid-encoded hemolysin determinant and its comparison with a corresponding chromosomal hemolysin sequence.</title>
        <authorList>
            <person name="Hess J."/>
            <person name="Wels W."/>
            <person name="Vogel M."/>
            <person name="Goebel W."/>
        </authorList>
    </citation>
    <scope>NUCLEOTIDE SEQUENCE [GENOMIC DNA]</scope>
</reference>
<reference key="2">
    <citation type="journal article" date="1992" name="Mol. Gen. Genet.">
        <title>A topological model for the haemolysin translocator protein HlyD.</title>
        <authorList>
            <person name="Schuelein R."/>
            <person name="Gentschev I."/>
            <person name="Mollenkopf H.-J."/>
            <person name="Goebel W."/>
        </authorList>
    </citation>
    <scope>TOPOLOGY</scope>
</reference>
<sequence>MKTWLMGFSEFLLRYKLVWSETWKIRKQLDTPVREKDENEFLPAHLELIETPVSRRPRLVAYFIMGFLVIAFILSVLGQVEIVATANGKLTHSGRSKEIKPIENSIVKEIIVKEGESVRKGDVLLKLTALGAEADTLKTQSSLLQARLEQTRYQILSRSIELNKLPELKLPDEPYFQNVSEEEVLRLTSLIKEQFSTWQNQKYQKELNLDKKRAERLTVLARINRYENLSRVEKSRLDDFSSLLHKQAIAKHAVLEQENKYVEAVNELRVYKSQLEQIESEILSAKEEYQLVTQLFKNEILDKLRQTTDNIGLLTLELAKNEERQQASVIRAPVSVKVQQLKVHTEGGVVTTAETLMVIVPEDDTLEVTALVQNKDIGFINVGQNAIIKVEAFPYTRYGYLVGKVKNINLDAIEDQRLGLVFNVIISIEENCLSTGNKNIPLSSGMAVTAEIKTGMRSVISYLLSPLEESVTESLRER</sequence>
<accession>P06739</accession>
<feature type="chain" id="PRO_0000201874" description="Hemolysin secretion protein D, plasmid">
    <location>
        <begin position="1"/>
        <end position="478"/>
    </location>
</feature>
<feature type="topological domain" description="Cytoplasmic" evidence="2">
    <location>
        <begin position="1"/>
        <end position="59"/>
    </location>
</feature>
<feature type="transmembrane region" description="Helical; Signal-anchor for type II membrane protein" evidence="1">
    <location>
        <begin position="60"/>
        <end position="80"/>
    </location>
</feature>
<feature type="topological domain" description="Periplasmic" evidence="2">
    <location>
        <begin position="81"/>
        <end position="478"/>
    </location>
</feature>